<protein>
    <recommendedName>
        <fullName evidence="1">Light-independent protochlorophyllide reductase subunit B</fullName>
        <shortName evidence="1">DPOR subunit B</shortName>
        <shortName evidence="1">LI-POR subunit B</shortName>
        <ecNumber evidence="1">1.3.7.7</ecNumber>
    </recommendedName>
</protein>
<keyword id="KW-0004">4Fe-4S</keyword>
<keyword id="KW-0067">ATP-binding</keyword>
<keyword id="KW-0077">Bacteriochlorophyll biosynthesis</keyword>
<keyword id="KW-0149">Chlorophyll biosynthesis</keyword>
<keyword id="KW-0408">Iron</keyword>
<keyword id="KW-0411">Iron-sulfur</keyword>
<keyword id="KW-0479">Metal-binding</keyword>
<keyword id="KW-0547">Nucleotide-binding</keyword>
<keyword id="KW-0560">Oxidoreductase</keyword>
<keyword id="KW-0602">Photosynthesis</keyword>
<feature type="chain" id="PRO_1000048417" description="Light-independent protochlorophyllide reductase subunit B">
    <location>
        <begin position="1"/>
        <end position="531"/>
    </location>
</feature>
<feature type="active site" description="Proton donor" evidence="1">
    <location>
        <position position="287"/>
    </location>
</feature>
<feature type="binding site" evidence="1">
    <location>
        <position position="36"/>
    </location>
    <ligand>
        <name>[4Fe-4S] cluster</name>
        <dbReference type="ChEBI" id="CHEBI:49883"/>
        <note>ligand shared with heterodimeric partner</note>
    </ligand>
</feature>
<feature type="binding site" evidence="1">
    <location>
        <begin position="422"/>
        <end position="423"/>
    </location>
    <ligand>
        <name>substrate</name>
    </ligand>
</feature>
<accession>Q07RY4</accession>
<organism>
    <name type="scientific">Rhodopseudomonas palustris (strain BisA53)</name>
    <dbReference type="NCBI Taxonomy" id="316055"/>
    <lineage>
        <taxon>Bacteria</taxon>
        <taxon>Pseudomonadati</taxon>
        <taxon>Pseudomonadota</taxon>
        <taxon>Alphaproteobacteria</taxon>
        <taxon>Hyphomicrobiales</taxon>
        <taxon>Nitrobacteraceae</taxon>
        <taxon>Rhodopseudomonas</taxon>
    </lineage>
</organism>
<reference key="1">
    <citation type="submission" date="2006-09" db="EMBL/GenBank/DDBJ databases">
        <title>Complete sequence of Rhodopseudomonas palustris BisA53.</title>
        <authorList>
            <consortium name="US DOE Joint Genome Institute"/>
            <person name="Copeland A."/>
            <person name="Lucas S."/>
            <person name="Lapidus A."/>
            <person name="Barry K."/>
            <person name="Detter J.C."/>
            <person name="Glavina del Rio T."/>
            <person name="Hammon N."/>
            <person name="Israni S."/>
            <person name="Dalin E."/>
            <person name="Tice H."/>
            <person name="Pitluck S."/>
            <person name="Chain P."/>
            <person name="Malfatti S."/>
            <person name="Shin M."/>
            <person name="Vergez L."/>
            <person name="Schmutz J."/>
            <person name="Larimer F."/>
            <person name="Land M."/>
            <person name="Hauser L."/>
            <person name="Pelletier D.A."/>
            <person name="Kyrpides N."/>
            <person name="Kim E."/>
            <person name="Harwood C.S."/>
            <person name="Oda Y."/>
            <person name="Richardson P."/>
        </authorList>
    </citation>
    <scope>NUCLEOTIDE SEQUENCE [LARGE SCALE GENOMIC DNA]</scope>
    <source>
        <strain>BisA53</strain>
    </source>
</reference>
<evidence type="ECO:0000255" key="1">
    <source>
        <dbReference type="HAMAP-Rule" id="MF_00353"/>
    </source>
</evidence>
<comment type="function">
    <text evidence="1">Component of the dark-operative protochlorophyllide reductase (DPOR) that uses Mg-ATP and reduced ferredoxin to reduce ring D of protochlorophyllide (Pchlide) to form chlorophyllide a (Chlide). This reaction is light-independent. The NB-protein (BchN-BchB) is the catalytic component of the complex.</text>
</comment>
<comment type="catalytic activity">
    <reaction evidence="1">
        <text>chlorophyllide a + oxidized 2[4Fe-4S]-[ferredoxin] + 2 ADP + 2 phosphate = protochlorophyllide a + reduced 2[4Fe-4S]-[ferredoxin] + 2 ATP + 2 H2O</text>
        <dbReference type="Rhea" id="RHEA:28202"/>
        <dbReference type="Rhea" id="RHEA-COMP:10002"/>
        <dbReference type="Rhea" id="RHEA-COMP:10004"/>
        <dbReference type="ChEBI" id="CHEBI:15377"/>
        <dbReference type="ChEBI" id="CHEBI:30616"/>
        <dbReference type="ChEBI" id="CHEBI:33722"/>
        <dbReference type="ChEBI" id="CHEBI:33723"/>
        <dbReference type="ChEBI" id="CHEBI:43474"/>
        <dbReference type="ChEBI" id="CHEBI:83348"/>
        <dbReference type="ChEBI" id="CHEBI:83350"/>
        <dbReference type="ChEBI" id="CHEBI:456216"/>
        <dbReference type="EC" id="1.3.7.7"/>
    </reaction>
</comment>
<comment type="cofactor">
    <cofactor evidence="1">
        <name>[4Fe-4S] cluster</name>
        <dbReference type="ChEBI" id="CHEBI:49883"/>
    </cofactor>
    <text evidence="1">Binds 1 [4Fe-4S] cluster per heterodimer. The cluster is bound at the heterodimer interface by residues from both subunits.</text>
</comment>
<comment type="pathway">
    <text evidence="1">Porphyrin-containing compound metabolism; bacteriochlorophyll biosynthesis (light-independent).</text>
</comment>
<comment type="subunit">
    <text evidence="1">Protochlorophyllide reductase is composed of three subunits; BchL, BchN and BchB. Forms a heterotetramer of two BchB and two BchN subunits.</text>
</comment>
<comment type="similarity">
    <text evidence="1">Belongs to the ChlB/BchB/BchZ family.</text>
</comment>
<sequence length="531" mass="58119">MQLTVWTYEGPPHVGAMRVATGMEGLHYVLHAPQGDTYADLLFTMIERRDRRPPVTYTTFAARDLGKDTAELFKTAAQNAYDRFKPQAMIVGASCTGSLIQDDPGGLAKALALPIPVVAIDLPAYQRKENWGAAETFYQLVRAIAGPKAPPPGSKRPERPAGKRPSCNLLGPTALGFRHRDDIIELTTLLGKLGIDVNVTAPMGATPADLARLGEADFNVVMYPETASQAASWLHRMFHQPFTKIVPIGVSATREFIEEVAKLADVDPTAVLKSYSSRLPWYSHSVDSTYLTGKRVFIFGDATHVVAAARMASDEMGFKVVGLGTYSREFGREIREAAKLYDVEPLITDDYLEVEAKVAELHPELVLGTQMERHIAKRLGVPCAVISAPVHVQDFPARYAPQMGFEGANVIFDTWVHPLMMGLEEHLLTMFRDDFEFKDGATPSHLGVGHAPAPAPAVADSAAVEVLDATTATTTETTTAVWAADAEKELRKIPFFVRGKARRNTERFANENGVATITVETLYDAKAHFSR</sequence>
<name>BCHB_RHOP5</name>
<gene>
    <name evidence="1" type="primary">bchB</name>
    <name type="ordered locus">RPE_1348</name>
</gene>
<proteinExistence type="inferred from homology"/>
<dbReference type="EC" id="1.3.7.7" evidence="1"/>
<dbReference type="EMBL" id="CP000463">
    <property type="protein sequence ID" value="ABJ05300.1"/>
    <property type="molecule type" value="Genomic_DNA"/>
</dbReference>
<dbReference type="SMR" id="Q07RY4"/>
<dbReference type="STRING" id="316055.RPE_1348"/>
<dbReference type="KEGG" id="rpe:RPE_1348"/>
<dbReference type="eggNOG" id="COG2710">
    <property type="taxonomic scope" value="Bacteria"/>
</dbReference>
<dbReference type="HOGENOM" id="CLU_025470_0_0_5"/>
<dbReference type="OrthoDB" id="5717231at2"/>
<dbReference type="UniPathway" id="UPA00671"/>
<dbReference type="GO" id="GO:0051539">
    <property type="term" value="F:4 iron, 4 sulfur cluster binding"/>
    <property type="evidence" value="ECO:0007669"/>
    <property type="project" value="UniProtKB-UniRule"/>
</dbReference>
<dbReference type="GO" id="GO:0005524">
    <property type="term" value="F:ATP binding"/>
    <property type="evidence" value="ECO:0007669"/>
    <property type="project" value="UniProtKB-UniRule"/>
</dbReference>
<dbReference type="GO" id="GO:0046872">
    <property type="term" value="F:metal ion binding"/>
    <property type="evidence" value="ECO:0007669"/>
    <property type="project" value="UniProtKB-KW"/>
</dbReference>
<dbReference type="GO" id="GO:0016730">
    <property type="term" value="F:oxidoreductase activity, acting on iron-sulfur proteins as donors"/>
    <property type="evidence" value="ECO:0007669"/>
    <property type="project" value="InterPro"/>
</dbReference>
<dbReference type="GO" id="GO:0016636">
    <property type="term" value="F:oxidoreductase activity, acting on the CH-CH group of donors, iron-sulfur protein as acceptor"/>
    <property type="evidence" value="ECO:0007669"/>
    <property type="project" value="UniProtKB-UniRule"/>
</dbReference>
<dbReference type="GO" id="GO:0036070">
    <property type="term" value="P:light-independent bacteriochlorophyll biosynthetic process"/>
    <property type="evidence" value="ECO:0007669"/>
    <property type="project" value="UniProtKB-UniRule"/>
</dbReference>
<dbReference type="GO" id="GO:0019685">
    <property type="term" value="P:photosynthesis, dark reaction"/>
    <property type="evidence" value="ECO:0007669"/>
    <property type="project" value="InterPro"/>
</dbReference>
<dbReference type="Gene3D" id="1.20.89.20">
    <property type="match status" value="1"/>
</dbReference>
<dbReference type="Gene3D" id="3.40.50.1980">
    <property type="entry name" value="Nitrogenase molybdenum iron protein domain"/>
    <property type="match status" value="3"/>
</dbReference>
<dbReference type="Gene3D" id="1.10.8.550">
    <property type="entry name" value="Proto-chlorophyllide reductase 57 kD subunit B"/>
    <property type="match status" value="1"/>
</dbReference>
<dbReference type="HAMAP" id="MF_00353">
    <property type="entry name" value="ChlB_BchB"/>
    <property type="match status" value="1"/>
</dbReference>
<dbReference type="InterPro" id="IPR050152">
    <property type="entry name" value="ChlB/BchB/BchZ"/>
</dbReference>
<dbReference type="InterPro" id="IPR013580">
    <property type="entry name" value="LI-POR_suB-like_C"/>
</dbReference>
<dbReference type="InterPro" id="IPR000510">
    <property type="entry name" value="Nase/OxRdtase_comp1"/>
</dbReference>
<dbReference type="InterPro" id="IPR042298">
    <property type="entry name" value="P-CP_red_C"/>
</dbReference>
<dbReference type="InterPro" id="IPR005969">
    <property type="entry name" value="Protochl_reductB"/>
</dbReference>
<dbReference type="InterPro" id="IPR016209">
    <property type="entry name" value="Protochlorophyllide_Rdtase"/>
</dbReference>
<dbReference type="NCBIfam" id="TIGR01278">
    <property type="entry name" value="DPOR_BchB"/>
    <property type="match status" value="1"/>
</dbReference>
<dbReference type="PANTHER" id="PTHR33712">
    <property type="entry name" value="LIGHT-INDEPENDENT PROTOCHLOROPHYLLIDE REDUCTASE SUBUNIT B"/>
    <property type="match status" value="1"/>
</dbReference>
<dbReference type="PANTHER" id="PTHR33712:SF7">
    <property type="entry name" value="LIGHT-INDEPENDENT PROTOCHLOROPHYLLIDE REDUCTASE SUBUNIT B"/>
    <property type="match status" value="1"/>
</dbReference>
<dbReference type="Pfam" id="PF00148">
    <property type="entry name" value="Oxidored_nitro"/>
    <property type="match status" value="1"/>
</dbReference>
<dbReference type="Pfam" id="PF08369">
    <property type="entry name" value="PCP_red"/>
    <property type="match status" value="1"/>
</dbReference>
<dbReference type="PIRSF" id="PIRSF000163">
    <property type="entry name" value="PCP_ChlB"/>
    <property type="match status" value="1"/>
</dbReference>
<dbReference type="SUPFAM" id="SSF53807">
    <property type="entry name" value="Helical backbone' metal receptor"/>
    <property type="match status" value="1"/>
</dbReference>